<evidence type="ECO:0000255" key="1">
    <source>
        <dbReference type="HAMAP-Rule" id="MF_00358"/>
    </source>
</evidence>
<evidence type="ECO:0000256" key="2">
    <source>
        <dbReference type="SAM" id="MobiDB-lite"/>
    </source>
</evidence>
<evidence type="ECO:0000305" key="3"/>
<proteinExistence type="inferred from homology"/>
<comment type="similarity">
    <text evidence="1">Belongs to the bacterial ribosomal protein bS21 family.</text>
</comment>
<reference key="1">
    <citation type="journal article" date="2009" name="J. Bacteriol.">
        <title>Genomic sequencing reveals regulatory mutations and recombinational events in the widely used MC4100 lineage of Escherichia coli K-12.</title>
        <authorList>
            <person name="Ferenci T."/>
            <person name="Zhou Z."/>
            <person name="Betteridge T."/>
            <person name="Ren Y."/>
            <person name="Liu Y."/>
            <person name="Feng L."/>
            <person name="Reeves P.R."/>
            <person name="Wang L."/>
        </authorList>
    </citation>
    <scope>NUCLEOTIDE SEQUENCE [LARGE SCALE GENOMIC DNA]</scope>
    <source>
        <strain>K12 / MC4100 / BW2952</strain>
    </source>
</reference>
<feature type="chain" id="PRO_1000205365" description="Small ribosomal subunit protein bS21">
    <location>
        <begin position="1"/>
        <end position="71"/>
    </location>
</feature>
<feature type="region of interest" description="Disordered" evidence="2">
    <location>
        <begin position="43"/>
        <end position="71"/>
    </location>
</feature>
<feature type="compositionally biased region" description="Basic residues" evidence="2">
    <location>
        <begin position="46"/>
        <end position="59"/>
    </location>
</feature>
<feature type="compositionally biased region" description="Basic and acidic residues" evidence="2">
    <location>
        <begin position="60"/>
        <end position="71"/>
    </location>
</feature>
<sequence>MPVIKVRENEPFDVALRRFKRSCEKAGVLAEVRRREFYEKPTTERKRAKASAVKRHAKKLARENARRTRLY</sequence>
<accession>C4ZQY2</accession>
<name>RS21_ECOBW</name>
<gene>
    <name evidence="1" type="primary">rpsU</name>
    <name type="ordered locus">BWG_2776</name>
</gene>
<protein>
    <recommendedName>
        <fullName evidence="1">Small ribosomal subunit protein bS21</fullName>
    </recommendedName>
    <alternativeName>
        <fullName evidence="3">30S ribosomal protein S21</fullName>
    </alternativeName>
</protein>
<keyword id="KW-0687">Ribonucleoprotein</keyword>
<keyword id="KW-0689">Ribosomal protein</keyword>
<dbReference type="EMBL" id="CP001396">
    <property type="protein sequence ID" value="ACR61794.1"/>
    <property type="molecule type" value="Genomic_DNA"/>
</dbReference>
<dbReference type="RefSeq" id="WP_001144069.1">
    <property type="nucleotide sequence ID" value="NC_012759.1"/>
</dbReference>
<dbReference type="SMR" id="C4ZQY2"/>
<dbReference type="GeneID" id="98390195"/>
<dbReference type="KEGG" id="ebw:BWG_2776"/>
<dbReference type="HOGENOM" id="CLU_159258_1_0_6"/>
<dbReference type="GO" id="GO:1990904">
    <property type="term" value="C:ribonucleoprotein complex"/>
    <property type="evidence" value="ECO:0007669"/>
    <property type="project" value="UniProtKB-KW"/>
</dbReference>
<dbReference type="GO" id="GO:0005840">
    <property type="term" value="C:ribosome"/>
    <property type="evidence" value="ECO:0007669"/>
    <property type="project" value="UniProtKB-KW"/>
</dbReference>
<dbReference type="GO" id="GO:0003735">
    <property type="term" value="F:structural constituent of ribosome"/>
    <property type="evidence" value="ECO:0007669"/>
    <property type="project" value="InterPro"/>
</dbReference>
<dbReference type="GO" id="GO:0006412">
    <property type="term" value="P:translation"/>
    <property type="evidence" value="ECO:0007669"/>
    <property type="project" value="UniProtKB-UniRule"/>
</dbReference>
<dbReference type="FunFam" id="1.20.5.1150:FF:000001">
    <property type="entry name" value="30S ribosomal protein S21"/>
    <property type="match status" value="1"/>
</dbReference>
<dbReference type="Gene3D" id="1.20.5.1150">
    <property type="entry name" value="Ribosomal protein S8"/>
    <property type="match status" value="1"/>
</dbReference>
<dbReference type="HAMAP" id="MF_00358">
    <property type="entry name" value="Ribosomal_bS21"/>
    <property type="match status" value="1"/>
</dbReference>
<dbReference type="InterPro" id="IPR001911">
    <property type="entry name" value="Ribosomal_bS21"/>
</dbReference>
<dbReference type="InterPro" id="IPR018278">
    <property type="entry name" value="Ribosomal_bS21_CS"/>
</dbReference>
<dbReference type="InterPro" id="IPR038380">
    <property type="entry name" value="Ribosomal_bS21_sf"/>
</dbReference>
<dbReference type="NCBIfam" id="TIGR00030">
    <property type="entry name" value="S21p"/>
    <property type="match status" value="1"/>
</dbReference>
<dbReference type="PANTHER" id="PTHR21109">
    <property type="entry name" value="MITOCHONDRIAL 28S RIBOSOMAL PROTEIN S21"/>
    <property type="match status" value="1"/>
</dbReference>
<dbReference type="PANTHER" id="PTHR21109:SF22">
    <property type="entry name" value="SMALL RIBOSOMAL SUBUNIT PROTEIN BS21"/>
    <property type="match status" value="1"/>
</dbReference>
<dbReference type="Pfam" id="PF01165">
    <property type="entry name" value="Ribosomal_S21"/>
    <property type="match status" value="1"/>
</dbReference>
<dbReference type="PRINTS" id="PR00976">
    <property type="entry name" value="RIBOSOMALS21"/>
</dbReference>
<dbReference type="PROSITE" id="PS01181">
    <property type="entry name" value="RIBOSOMAL_S21"/>
    <property type="match status" value="1"/>
</dbReference>
<organism>
    <name type="scientific">Escherichia coli (strain K12 / MC4100 / BW2952)</name>
    <dbReference type="NCBI Taxonomy" id="595496"/>
    <lineage>
        <taxon>Bacteria</taxon>
        <taxon>Pseudomonadati</taxon>
        <taxon>Pseudomonadota</taxon>
        <taxon>Gammaproteobacteria</taxon>
        <taxon>Enterobacterales</taxon>
        <taxon>Enterobacteriaceae</taxon>
        <taxon>Escherichia</taxon>
    </lineage>
</organism>